<protein>
    <recommendedName>
        <fullName>Cytochrome c-type protein NapC</fullName>
    </recommendedName>
</protein>
<organism>
    <name type="scientific">Escherichia coli O157:H7</name>
    <dbReference type="NCBI Taxonomy" id="83334"/>
    <lineage>
        <taxon>Bacteria</taxon>
        <taxon>Pseudomonadati</taxon>
        <taxon>Pseudomonadota</taxon>
        <taxon>Gammaproteobacteria</taxon>
        <taxon>Enterobacterales</taxon>
        <taxon>Enterobacteriaceae</taxon>
        <taxon>Escherichia</taxon>
    </lineage>
</organism>
<reference key="1">
    <citation type="journal article" date="2001" name="Nature">
        <title>Genome sequence of enterohaemorrhagic Escherichia coli O157:H7.</title>
        <authorList>
            <person name="Perna N.T."/>
            <person name="Plunkett G. III"/>
            <person name="Burland V."/>
            <person name="Mau B."/>
            <person name="Glasner J.D."/>
            <person name="Rose D.J."/>
            <person name="Mayhew G.F."/>
            <person name="Evans P.S."/>
            <person name="Gregor J."/>
            <person name="Kirkpatrick H.A."/>
            <person name="Posfai G."/>
            <person name="Hackett J."/>
            <person name="Klink S."/>
            <person name="Boutin A."/>
            <person name="Shao Y."/>
            <person name="Miller L."/>
            <person name="Grotbeck E.J."/>
            <person name="Davis N.W."/>
            <person name="Lim A."/>
            <person name="Dimalanta E.T."/>
            <person name="Potamousis K."/>
            <person name="Apodaca J."/>
            <person name="Anantharaman T.S."/>
            <person name="Lin J."/>
            <person name="Yen G."/>
            <person name="Schwartz D.C."/>
            <person name="Welch R.A."/>
            <person name="Blattner F.R."/>
        </authorList>
    </citation>
    <scope>NUCLEOTIDE SEQUENCE [LARGE SCALE GENOMIC DNA]</scope>
    <source>
        <strain>O157:H7 / EDL933 / ATCC 700927 / EHEC</strain>
    </source>
</reference>
<reference key="2">
    <citation type="journal article" date="2001" name="DNA Res.">
        <title>Complete genome sequence of enterohemorrhagic Escherichia coli O157:H7 and genomic comparison with a laboratory strain K-12.</title>
        <authorList>
            <person name="Hayashi T."/>
            <person name="Makino K."/>
            <person name="Ohnishi M."/>
            <person name="Kurokawa K."/>
            <person name="Ishii K."/>
            <person name="Yokoyama K."/>
            <person name="Han C.-G."/>
            <person name="Ohtsubo E."/>
            <person name="Nakayama K."/>
            <person name="Murata T."/>
            <person name="Tanaka M."/>
            <person name="Tobe T."/>
            <person name="Iida T."/>
            <person name="Takami H."/>
            <person name="Honda T."/>
            <person name="Sasakawa C."/>
            <person name="Ogasawara N."/>
            <person name="Yasunaga T."/>
            <person name="Kuhara S."/>
            <person name="Shiba T."/>
            <person name="Hattori M."/>
            <person name="Shinagawa H."/>
        </authorList>
    </citation>
    <scope>NUCLEOTIDE SEQUENCE [LARGE SCALE GENOMIC DNA]</scope>
    <source>
        <strain>O157:H7 / Sakai / RIMD 0509952 / EHEC</strain>
    </source>
</reference>
<accession>P0ABL7</accession>
<accession>P33932</accession>
<comment type="function">
    <text evidence="1">Mediates electron flow from quinones to the NapAB complex.</text>
</comment>
<comment type="subcellular location">
    <subcellularLocation>
        <location>Cell inner membrane</location>
        <topology>Single-pass membrane protein</topology>
    </subcellularLocation>
</comment>
<comment type="PTM">
    <text evidence="4">Binds 4 heme groups per subunit.</text>
</comment>
<comment type="similarity">
    <text evidence="4">Belongs to the NapC/NirT/NrfH family.</text>
</comment>
<dbReference type="EMBL" id="AE005174">
    <property type="protein sequence ID" value="AAG57337.1"/>
    <property type="molecule type" value="Genomic_DNA"/>
</dbReference>
<dbReference type="EMBL" id="BA000007">
    <property type="protein sequence ID" value="BAB36514.1"/>
    <property type="molecule type" value="Genomic_DNA"/>
</dbReference>
<dbReference type="PIR" id="C91015">
    <property type="entry name" value="C91015"/>
</dbReference>
<dbReference type="PIR" id="E85859">
    <property type="entry name" value="E85859"/>
</dbReference>
<dbReference type="RefSeq" id="NP_311118.1">
    <property type="nucleotide sequence ID" value="NC_002695.1"/>
</dbReference>
<dbReference type="RefSeq" id="WP_000528376.1">
    <property type="nucleotide sequence ID" value="NZ_VOAI01000001.1"/>
</dbReference>
<dbReference type="STRING" id="155864.Z3459"/>
<dbReference type="GeneID" id="916797"/>
<dbReference type="GeneID" id="93774976"/>
<dbReference type="KEGG" id="ece:Z3459"/>
<dbReference type="KEGG" id="ecs:ECs_3091"/>
<dbReference type="PATRIC" id="fig|386585.9.peg.3225"/>
<dbReference type="eggNOG" id="COG3005">
    <property type="taxonomic scope" value="Bacteria"/>
</dbReference>
<dbReference type="HOGENOM" id="CLU_096753_2_0_6"/>
<dbReference type="OMA" id="MDFTAQK"/>
<dbReference type="Proteomes" id="UP000000558">
    <property type="component" value="Chromosome"/>
</dbReference>
<dbReference type="Proteomes" id="UP000002519">
    <property type="component" value="Chromosome"/>
</dbReference>
<dbReference type="GO" id="GO:0005886">
    <property type="term" value="C:plasma membrane"/>
    <property type="evidence" value="ECO:0007669"/>
    <property type="project" value="UniProtKB-SubCell"/>
</dbReference>
<dbReference type="GO" id="GO:0009055">
    <property type="term" value="F:electron transfer activity"/>
    <property type="evidence" value="ECO:0007669"/>
    <property type="project" value="TreeGrafter"/>
</dbReference>
<dbReference type="GO" id="GO:0020037">
    <property type="term" value="F:heme binding"/>
    <property type="evidence" value="ECO:0007669"/>
    <property type="project" value="InterPro"/>
</dbReference>
<dbReference type="GO" id="GO:0046872">
    <property type="term" value="F:metal ion binding"/>
    <property type="evidence" value="ECO:0007669"/>
    <property type="project" value="UniProtKB-KW"/>
</dbReference>
<dbReference type="GO" id="GO:0009061">
    <property type="term" value="P:anaerobic respiration"/>
    <property type="evidence" value="ECO:0007669"/>
    <property type="project" value="TreeGrafter"/>
</dbReference>
<dbReference type="GO" id="GO:0019333">
    <property type="term" value="P:denitrification pathway"/>
    <property type="evidence" value="ECO:0007669"/>
    <property type="project" value="InterPro"/>
</dbReference>
<dbReference type="FunFam" id="1.10.3820.10:FF:000001">
    <property type="entry name" value="Cytochrome c-type protein"/>
    <property type="match status" value="1"/>
</dbReference>
<dbReference type="Gene3D" id="1.10.3820.10">
    <property type="entry name" value="Di-heme elbow motif domain"/>
    <property type="match status" value="1"/>
</dbReference>
<dbReference type="InterPro" id="IPR051174">
    <property type="entry name" value="Cytochrome_c-type_ET"/>
</dbReference>
<dbReference type="InterPro" id="IPR036280">
    <property type="entry name" value="Multihaem_cyt_sf"/>
</dbReference>
<dbReference type="InterPro" id="IPR024717">
    <property type="entry name" value="NapC/NirT/NrfH"/>
</dbReference>
<dbReference type="InterPro" id="IPR005126">
    <property type="entry name" value="NapC/NirT_cyt_c_N"/>
</dbReference>
<dbReference type="InterPro" id="IPR038266">
    <property type="entry name" value="NapC/NirT_cytc_sf"/>
</dbReference>
<dbReference type="InterPro" id="IPR011885">
    <property type="entry name" value="NO3Rdtase_cyt_c_NapC/NirT"/>
</dbReference>
<dbReference type="NCBIfam" id="TIGR02161">
    <property type="entry name" value="napC_nirT"/>
    <property type="match status" value="1"/>
</dbReference>
<dbReference type="NCBIfam" id="NF007906">
    <property type="entry name" value="PRK10617.1"/>
    <property type="match status" value="1"/>
</dbReference>
<dbReference type="PANTHER" id="PTHR30333">
    <property type="entry name" value="CYTOCHROME C-TYPE PROTEIN"/>
    <property type="match status" value="1"/>
</dbReference>
<dbReference type="PANTHER" id="PTHR30333:SF1">
    <property type="entry name" value="CYTOCHROME C-TYPE PROTEIN NAPC"/>
    <property type="match status" value="1"/>
</dbReference>
<dbReference type="Pfam" id="PF03264">
    <property type="entry name" value="Cytochrom_NNT"/>
    <property type="match status" value="1"/>
</dbReference>
<dbReference type="PIRSF" id="PIRSF000013">
    <property type="entry name" value="4_hem_cytochrm_NapC"/>
    <property type="match status" value="1"/>
</dbReference>
<dbReference type="SUPFAM" id="SSF48695">
    <property type="entry name" value="Multiheme cytochromes"/>
    <property type="match status" value="1"/>
</dbReference>
<dbReference type="PROSITE" id="PS51008">
    <property type="entry name" value="MULTIHEME_CYTC"/>
    <property type="match status" value="1"/>
</dbReference>
<name>NAPC_ECO57</name>
<feature type="chain" id="PRO_0000108433" description="Cytochrome c-type protein NapC">
    <location>
        <begin position="1"/>
        <end position="200"/>
    </location>
</feature>
<feature type="topological domain" description="Cytoplasmic" evidence="3">
    <location>
        <begin position="1"/>
        <end position="23"/>
    </location>
</feature>
<feature type="transmembrane region" description="Helical" evidence="3">
    <location>
        <begin position="24"/>
        <end position="44"/>
    </location>
</feature>
<feature type="topological domain" description="Periplasmic" evidence="3">
    <location>
        <begin position="45"/>
        <end position="200"/>
    </location>
</feature>
<feature type="binding site" description="covalent" evidence="2">
    <location>
        <position position="57"/>
    </location>
    <ligand>
        <name>heme</name>
        <dbReference type="ChEBI" id="CHEBI:30413"/>
        <label>1</label>
    </ligand>
</feature>
<feature type="binding site" description="covalent" evidence="2">
    <location>
        <position position="60"/>
    </location>
    <ligand>
        <name>heme</name>
        <dbReference type="ChEBI" id="CHEBI:30413"/>
        <label>1</label>
    </ligand>
</feature>
<feature type="binding site" description="axial binding residue" evidence="2">
    <location>
        <position position="63"/>
    </location>
    <ligand>
        <name>heme</name>
        <dbReference type="ChEBI" id="CHEBI:30413"/>
        <label>1</label>
    </ligand>
    <ligandPart>
        <name>Fe</name>
        <dbReference type="ChEBI" id="CHEBI:18248"/>
    </ligandPart>
</feature>
<feature type="binding site" description="covalent" evidence="2">
    <location>
        <position position="87"/>
    </location>
    <ligand>
        <name>heme</name>
        <dbReference type="ChEBI" id="CHEBI:30413"/>
        <label>2</label>
    </ligand>
</feature>
<feature type="binding site" description="covalent" evidence="2">
    <location>
        <position position="90"/>
    </location>
    <ligand>
        <name>heme</name>
        <dbReference type="ChEBI" id="CHEBI:30413"/>
        <label>2</label>
    </ligand>
</feature>
<feature type="binding site" description="axial binding residue" evidence="2">
    <location>
        <position position="91"/>
    </location>
    <ligand>
        <name>heme</name>
        <dbReference type="ChEBI" id="CHEBI:30413"/>
        <label>2</label>
    </ligand>
    <ligandPart>
        <name>Fe</name>
        <dbReference type="ChEBI" id="CHEBI:18248"/>
    </ligandPart>
</feature>
<feature type="binding site" evidence="2">
    <location>
        <position position="103"/>
    </location>
    <ligand>
        <name>substrate</name>
    </ligand>
</feature>
<feature type="binding site" description="axial binding residue" evidence="2">
    <location>
        <position position="109"/>
    </location>
    <ligand>
        <name>heme</name>
        <dbReference type="ChEBI" id="CHEBI:30413"/>
        <label>1</label>
    </ligand>
    <ligandPart>
        <name>Fe</name>
        <dbReference type="ChEBI" id="CHEBI:18248"/>
    </ligandPart>
</feature>
<feature type="binding site" description="covalent" evidence="2">
    <location>
        <position position="147"/>
    </location>
    <ligand>
        <name>heme</name>
        <dbReference type="ChEBI" id="CHEBI:30413"/>
        <label>3</label>
    </ligand>
</feature>
<feature type="binding site" description="covalent" evidence="2">
    <location>
        <position position="150"/>
    </location>
    <ligand>
        <name>heme</name>
        <dbReference type="ChEBI" id="CHEBI:30413"/>
        <label>3</label>
    </ligand>
</feature>
<feature type="binding site" description="axial binding residue" evidence="2">
    <location>
        <position position="151"/>
    </location>
    <ligand>
        <name>heme</name>
        <dbReference type="ChEBI" id="CHEBI:30413"/>
        <label>3</label>
    </ligand>
    <ligandPart>
        <name>Fe</name>
        <dbReference type="ChEBI" id="CHEBI:18248"/>
    </ligandPart>
</feature>
<feature type="binding site" description="covalent" evidence="2">
    <location>
        <position position="179"/>
    </location>
    <ligand>
        <name>heme</name>
        <dbReference type="ChEBI" id="CHEBI:30413"/>
        <label>4</label>
    </ligand>
</feature>
<feature type="binding site" description="covalent" evidence="2">
    <location>
        <position position="182"/>
    </location>
    <ligand>
        <name>heme</name>
        <dbReference type="ChEBI" id="CHEBI:30413"/>
        <label>4</label>
    </ligand>
</feature>
<feature type="binding site" description="axial binding residue" evidence="2">
    <location>
        <position position="183"/>
    </location>
    <ligand>
        <name>heme</name>
        <dbReference type="ChEBI" id="CHEBI:30413"/>
        <label>4</label>
    </ligand>
    <ligandPart>
        <name>Fe</name>
        <dbReference type="ChEBI" id="CHEBI:18248"/>
    </ligandPart>
</feature>
<feature type="binding site" description="axial binding residue" evidence="2">
    <location>
        <position position="188"/>
    </location>
    <ligand>
        <name>heme</name>
        <dbReference type="ChEBI" id="CHEBI:30413"/>
        <label>2</label>
    </ligand>
    <ligandPart>
        <name>Fe</name>
        <dbReference type="ChEBI" id="CHEBI:18248"/>
    </ligandPart>
</feature>
<sequence>MGNSDRKPGLIKRLWKWWRTPSRLALGTLLLIGFVGGIVFWGGFNTGMEKANTEEFCISCHEMRNTVYQEYMDSVHYNNRSGVRATCPDCHVPHEFVPKMIRKLKASKELYGKIFGVIDTPQKFEAHRLTMAQNEWRRMKDNNSQECRNCHNFEYMDTTAQKSVAAKMHDQAVKDGQTCIDCHKGIAHKLPDMREVEPGF</sequence>
<evidence type="ECO:0000250" key="1"/>
<evidence type="ECO:0000250" key="2">
    <source>
        <dbReference type="UniProtKB" id="Q72EF4"/>
    </source>
</evidence>
<evidence type="ECO:0000255" key="3"/>
<evidence type="ECO:0000305" key="4"/>
<keyword id="KW-0997">Cell inner membrane</keyword>
<keyword id="KW-1003">Cell membrane</keyword>
<keyword id="KW-0249">Electron transport</keyword>
<keyword id="KW-0349">Heme</keyword>
<keyword id="KW-0408">Iron</keyword>
<keyword id="KW-0472">Membrane</keyword>
<keyword id="KW-0479">Metal-binding</keyword>
<keyword id="KW-1185">Reference proteome</keyword>
<keyword id="KW-0812">Transmembrane</keyword>
<keyword id="KW-1133">Transmembrane helix</keyword>
<keyword id="KW-0813">Transport</keyword>
<gene>
    <name type="primary">napC</name>
    <name type="ordered locus">Z3459</name>
    <name type="ordered locus">ECs3091</name>
</gene>
<proteinExistence type="inferred from homology"/>